<reference key="1">
    <citation type="journal article" date="2006" name="Science">
        <title>Genomic islands and the ecology and evolution of Prochlorococcus.</title>
        <authorList>
            <person name="Coleman M.L."/>
            <person name="Sullivan M.B."/>
            <person name="Martiny A.C."/>
            <person name="Steglich C."/>
            <person name="Barry K."/>
            <person name="Delong E.F."/>
            <person name="Chisholm S.W."/>
        </authorList>
    </citation>
    <scope>NUCLEOTIDE SEQUENCE [LARGE SCALE GENOMIC DNA]</scope>
    <source>
        <strain>MIT 9312</strain>
    </source>
</reference>
<evidence type="ECO:0000255" key="1">
    <source>
        <dbReference type="HAMAP-Rule" id="MF_01321"/>
    </source>
</evidence>
<evidence type="ECO:0000256" key="2">
    <source>
        <dbReference type="SAM" id="MobiDB-lite"/>
    </source>
</evidence>
<comment type="function">
    <text evidence="1">DNA-dependent RNA polymerase catalyzes the transcription of DNA into RNA using the four ribonucleoside triphosphates as substrates.</text>
</comment>
<comment type="catalytic activity">
    <reaction evidence="1">
        <text>RNA(n) + a ribonucleoside 5'-triphosphate = RNA(n+1) + diphosphate</text>
        <dbReference type="Rhea" id="RHEA:21248"/>
        <dbReference type="Rhea" id="RHEA-COMP:14527"/>
        <dbReference type="Rhea" id="RHEA-COMP:17342"/>
        <dbReference type="ChEBI" id="CHEBI:33019"/>
        <dbReference type="ChEBI" id="CHEBI:61557"/>
        <dbReference type="ChEBI" id="CHEBI:140395"/>
        <dbReference type="EC" id="2.7.7.6"/>
    </reaction>
</comment>
<comment type="subunit">
    <text evidence="1">In cyanobacteria the RNAP catalytic core is composed of 2 alpha, 1 beta, 1 beta', 1 gamma and 1 omega subunit. When a sigma factor is associated with the core the holoenzyme is formed, which can initiate transcription.</text>
</comment>
<comment type="similarity">
    <text evidence="1">Belongs to the RNA polymerase beta chain family.</text>
</comment>
<accession>Q318Q7</accession>
<proteinExistence type="inferred from homology"/>
<dbReference type="EC" id="2.7.7.6" evidence="1"/>
<dbReference type="EMBL" id="CP000111">
    <property type="protein sequence ID" value="ABB50638.1"/>
    <property type="molecule type" value="Genomic_DNA"/>
</dbReference>
<dbReference type="RefSeq" id="WP_011377120.1">
    <property type="nucleotide sequence ID" value="NC_007577.1"/>
</dbReference>
<dbReference type="SMR" id="Q318Q7"/>
<dbReference type="STRING" id="74546.PMT9312_1578"/>
<dbReference type="KEGG" id="pmi:PMT9312_1578"/>
<dbReference type="eggNOG" id="COG0085">
    <property type="taxonomic scope" value="Bacteria"/>
</dbReference>
<dbReference type="HOGENOM" id="CLU_000524_4_3_3"/>
<dbReference type="OrthoDB" id="9803954at2"/>
<dbReference type="Proteomes" id="UP000002715">
    <property type="component" value="Chromosome"/>
</dbReference>
<dbReference type="GO" id="GO:0000428">
    <property type="term" value="C:DNA-directed RNA polymerase complex"/>
    <property type="evidence" value="ECO:0007669"/>
    <property type="project" value="UniProtKB-KW"/>
</dbReference>
<dbReference type="GO" id="GO:0003677">
    <property type="term" value="F:DNA binding"/>
    <property type="evidence" value="ECO:0007669"/>
    <property type="project" value="UniProtKB-UniRule"/>
</dbReference>
<dbReference type="GO" id="GO:0003899">
    <property type="term" value="F:DNA-directed RNA polymerase activity"/>
    <property type="evidence" value="ECO:0007669"/>
    <property type="project" value="UniProtKB-UniRule"/>
</dbReference>
<dbReference type="GO" id="GO:0032549">
    <property type="term" value="F:ribonucleoside binding"/>
    <property type="evidence" value="ECO:0007669"/>
    <property type="project" value="InterPro"/>
</dbReference>
<dbReference type="GO" id="GO:0006351">
    <property type="term" value="P:DNA-templated transcription"/>
    <property type="evidence" value="ECO:0007669"/>
    <property type="project" value="UniProtKB-UniRule"/>
</dbReference>
<dbReference type="CDD" id="cd00653">
    <property type="entry name" value="RNA_pol_B_RPB2"/>
    <property type="match status" value="1"/>
</dbReference>
<dbReference type="FunFam" id="3.90.1800.10:FF:000001">
    <property type="entry name" value="DNA-directed RNA polymerase subunit beta"/>
    <property type="match status" value="1"/>
</dbReference>
<dbReference type="Gene3D" id="2.40.50.100">
    <property type="match status" value="1"/>
</dbReference>
<dbReference type="Gene3D" id="2.40.50.150">
    <property type="match status" value="1"/>
</dbReference>
<dbReference type="Gene3D" id="3.90.1100.10">
    <property type="match status" value="1"/>
</dbReference>
<dbReference type="Gene3D" id="2.30.150.10">
    <property type="entry name" value="DNA-directed RNA polymerase, beta subunit, external 1 domain"/>
    <property type="match status" value="1"/>
</dbReference>
<dbReference type="Gene3D" id="2.40.270.10">
    <property type="entry name" value="DNA-directed RNA polymerase, subunit 2, domain 6"/>
    <property type="match status" value="1"/>
</dbReference>
<dbReference type="Gene3D" id="3.90.1800.10">
    <property type="entry name" value="RNA polymerase alpha subunit dimerisation domain"/>
    <property type="match status" value="1"/>
</dbReference>
<dbReference type="Gene3D" id="3.90.1110.10">
    <property type="entry name" value="RNA polymerase Rpb2, domain 2"/>
    <property type="match status" value="1"/>
</dbReference>
<dbReference type="HAMAP" id="MF_01321">
    <property type="entry name" value="RNApol_bact_RpoB"/>
    <property type="match status" value="1"/>
</dbReference>
<dbReference type="InterPro" id="IPR042107">
    <property type="entry name" value="DNA-dir_RNA_pol_bsu_ext_1_sf"/>
</dbReference>
<dbReference type="InterPro" id="IPR019462">
    <property type="entry name" value="DNA-dir_RNA_pol_bsu_external_1"/>
</dbReference>
<dbReference type="InterPro" id="IPR015712">
    <property type="entry name" value="DNA-dir_RNA_pol_su2"/>
</dbReference>
<dbReference type="InterPro" id="IPR007120">
    <property type="entry name" value="DNA-dir_RNAP_su2_dom"/>
</dbReference>
<dbReference type="InterPro" id="IPR037033">
    <property type="entry name" value="DNA-dir_RNAP_su2_hyb_sf"/>
</dbReference>
<dbReference type="InterPro" id="IPR010243">
    <property type="entry name" value="RNA_pol_bsu_bac"/>
</dbReference>
<dbReference type="InterPro" id="IPR007121">
    <property type="entry name" value="RNA_pol_bsu_CS"/>
</dbReference>
<dbReference type="InterPro" id="IPR007644">
    <property type="entry name" value="RNA_pol_bsu_protrusion"/>
</dbReference>
<dbReference type="InterPro" id="IPR007642">
    <property type="entry name" value="RNA_pol_Rpb2_2"/>
</dbReference>
<dbReference type="InterPro" id="IPR037034">
    <property type="entry name" value="RNA_pol_Rpb2_2_sf"/>
</dbReference>
<dbReference type="InterPro" id="IPR007645">
    <property type="entry name" value="RNA_pol_Rpb2_3"/>
</dbReference>
<dbReference type="InterPro" id="IPR007641">
    <property type="entry name" value="RNA_pol_Rpb2_7"/>
</dbReference>
<dbReference type="InterPro" id="IPR014724">
    <property type="entry name" value="RNA_pol_RPB2_OB-fold"/>
</dbReference>
<dbReference type="NCBIfam" id="NF001616">
    <property type="entry name" value="PRK00405.1"/>
    <property type="match status" value="1"/>
</dbReference>
<dbReference type="NCBIfam" id="TIGR02013">
    <property type="entry name" value="rpoB"/>
    <property type="match status" value="1"/>
</dbReference>
<dbReference type="PANTHER" id="PTHR20856">
    <property type="entry name" value="DNA-DIRECTED RNA POLYMERASE I SUBUNIT 2"/>
    <property type="match status" value="1"/>
</dbReference>
<dbReference type="Pfam" id="PF04563">
    <property type="entry name" value="RNA_pol_Rpb2_1"/>
    <property type="match status" value="1"/>
</dbReference>
<dbReference type="Pfam" id="PF04561">
    <property type="entry name" value="RNA_pol_Rpb2_2"/>
    <property type="match status" value="1"/>
</dbReference>
<dbReference type="Pfam" id="PF04565">
    <property type="entry name" value="RNA_pol_Rpb2_3"/>
    <property type="match status" value="1"/>
</dbReference>
<dbReference type="Pfam" id="PF10385">
    <property type="entry name" value="RNA_pol_Rpb2_45"/>
    <property type="match status" value="1"/>
</dbReference>
<dbReference type="Pfam" id="PF00562">
    <property type="entry name" value="RNA_pol_Rpb2_6"/>
    <property type="match status" value="1"/>
</dbReference>
<dbReference type="Pfam" id="PF04560">
    <property type="entry name" value="RNA_pol_Rpb2_7"/>
    <property type="match status" value="1"/>
</dbReference>
<dbReference type="SUPFAM" id="SSF64484">
    <property type="entry name" value="beta and beta-prime subunits of DNA dependent RNA-polymerase"/>
    <property type="match status" value="1"/>
</dbReference>
<dbReference type="PROSITE" id="PS01166">
    <property type="entry name" value="RNA_POL_BETA"/>
    <property type="match status" value="1"/>
</dbReference>
<gene>
    <name evidence="1" type="primary">rpoB</name>
    <name type="ordered locus">PMT9312_1578</name>
</gene>
<sequence length="1097" mass="122905">MSSSALQVAKTGTYLPDLVEVQRASFKWFLEKGLIEELQNFSPISDYTGKLELHFIGEEYRLKRPRHDVEEAKRRDATFASQMYVTCRLINKETGEIKEQEVFIGELPLMTERGTFIINGAERVIVNQIVRSPGVYFKDEQDKNGRRTYNASVIPNRGAWLKFETDKNNLLYVRVDKTRKINAHVLMRAMGLSDNDVVDKLRHPEFYQNSIESANDEGINSEDQALLELYKKLRPGEPPSVSGGQQLLFSRFFDPKRYDLGRVGRYKINKKLRLTVPDDVRTLTHEDVLSTIDYLINLELDIGGASLDDIDHLGNRRVRSVGELLQNQVRVGLNRLERIIKERMTVGETDSLTPAQLVNPKPLVAAIKEFFGSSQLSQFMDQTNPLAELTHKRRISALGPGGLTRERAGFAVRDIHPSHYGRLCPIETPEGPNAGLINSLATHARVNEYGFIETPFWKVNNGKVNKDGDPIYLSADLEDECRVAPGDVATDKDGNILANLIPVRYRQDFEKVPPEQVDYVQLSPVQVISVATSLIPFLEHDDANRALMGSNMQRQAVPLLRPERPLVGTGLESQVARDSGMVPITKVNGTVSYVDANEIVVKGEDGNEHFHYLQKYQRSNQDTCLNQRPIVNIGDQVISGQVLADGSACEGGEIALGQNVLIAYMPWEGYNYEDAILVSERMVTDDLYTSVHIEKYEIEARQTKLGPEEITREIPNISEDSLNNLDEMGIIRIGAFVESGDILVGKVTPKGESDQPPEEKLLRAIFGEKARDVRDNSLRVPKTEKGRVLDVRIYTREQGDELPPGANMVVRVYVAQRRKIQVGDKMAGRHGNKGIISRILPREDMPYLPDGTPVDIVLNPLGVPSRMNVGQVFELLMGWAASNLNCRVKVVPFDEMYGAEKSHQTVQAFLEEASKQPGKAWIYNPEDPGKLLLKDGRTGEPFDQPVAVGYSHFLKLVHLVDDKIHARSTGPYSLVTQQPLGGKAQQGGQRLGEMEVWALEAYGAAYTLQELLTVKSDDMQGRNEALNAIVKGKPIPRPGTPESFKVLMRELQSLGLDIGVYTDEGKEVDLMQDINPRRNTPSRPTYESLGTSEYEED</sequence>
<name>RPOB_PROM9</name>
<protein>
    <recommendedName>
        <fullName evidence="1">DNA-directed RNA polymerase subunit beta</fullName>
        <shortName evidence="1">RNAP subunit beta</shortName>
        <ecNumber evidence="1">2.7.7.6</ecNumber>
    </recommendedName>
    <alternativeName>
        <fullName evidence="1">RNA polymerase subunit beta</fullName>
    </alternativeName>
    <alternativeName>
        <fullName evidence="1">Transcriptase subunit beta</fullName>
    </alternativeName>
</protein>
<organism>
    <name type="scientific">Prochlorococcus marinus (strain MIT 9312)</name>
    <dbReference type="NCBI Taxonomy" id="74546"/>
    <lineage>
        <taxon>Bacteria</taxon>
        <taxon>Bacillati</taxon>
        <taxon>Cyanobacteriota</taxon>
        <taxon>Cyanophyceae</taxon>
        <taxon>Synechococcales</taxon>
        <taxon>Prochlorococcaceae</taxon>
        <taxon>Prochlorococcus</taxon>
    </lineage>
</organism>
<feature type="chain" id="PRO_0000237310" description="DNA-directed RNA polymerase subunit beta">
    <location>
        <begin position="1"/>
        <end position="1097"/>
    </location>
</feature>
<feature type="region of interest" description="Disordered" evidence="2">
    <location>
        <begin position="1073"/>
        <end position="1097"/>
    </location>
</feature>
<feature type="compositionally biased region" description="Polar residues" evidence="2">
    <location>
        <begin position="1077"/>
        <end position="1091"/>
    </location>
</feature>
<keyword id="KW-0240">DNA-directed RNA polymerase</keyword>
<keyword id="KW-0548">Nucleotidyltransferase</keyword>
<keyword id="KW-0804">Transcription</keyword>
<keyword id="KW-0808">Transferase</keyword>